<keyword id="KW-0031">Aminopeptidase</keyword>
<keyword id="KW-0963">Cytoplasm</keyword>
<keyword id="KW-0378">Hydrolase</keyword>
<keyword id="KW-0645">Protease</keyword>
<keyword id="KW-0788">Thiol protease</keyword>
<name>PEPW_LACDL</name>
<reference key="1">
    <citation type="journal article" date="1997" name="Microbiology">
        <title>Lactobacillus delbrueckii subsp. lactis DSM7290 pepG gene encodes a novel cysteine aminopeptidase.</title>
        <authorList>
            <person name="Klein J.R."/>
            <person name="Schick J."/>
            <person name="Henrich B."/>
            <person name="Plapp R."/>
        </authorList>
    </citation>
    <scope>NUCLEOTIDE SEQUENCE [GENOMIC DNA]</scope>
    <source>
        <strain>DSM 7290</strain>
    </source>
</reference>
<evidence type="ECO:0000255" key="1">
    <source>
        <dbReference type="PROSITE-ProRule" id="PRU10088"/>
    </source>
</evidence>
<evidence type="ECO:0000305" key="2"/>
<accession>P94868</accession>
<organism>
    <name type="scientific">Lactobacillus delbrueckii subsp. lactis</name>
    <dbReference type="NCBI Taxonomy" id="29397"/>
    <lineage>
        <taxon>Bacteria</taxon>
        <taxon>Bacillati</taxon>
        <taxon>Bacillota</taxon>
        <taxon>Bacilli</taxon>
        <taxon>Lactobacillales</taxon>
        <taxon>Lactobacillaceae</taxon>
        <taxon>Lactobacillus</taxon>
    </lineage>
</organism>
<comment type="subcellular location">
    <subcellularLocation>
        <location evidence="2">Cytoplasm</location>
    </subcellularLocation>
</comment>
<comment type="similarity">
    <text evidence="1">Belongs to the peptidase C1 family.</text>
</comment>
<proteinExistence type="inferred from homology"/>
<feature type="chain" id="PRO_0000050599" description="Aminopeptidase W">
    <location>
        <begin position="1"/>
        <end position="437"/>
    </location>
</feature>
<feature type="active site" evidence="1">
    <location>
        <position position="70"/>
    </location>
</feature>
<feature type="active site" evidence="1">
    <location>
        <position position="361"/>
    </location>
</feature>
<feature type="active site" evidence="1">
    <location>
        <position position="382"/>
    </location>
</feature>
<protein>
    <recommendedName>
        <fullName>Aminopeptidase W</fullName>
        <ecNumber>3.4.22.-</ecNumber>
    </recommendedName>
</protein>
<gene>
    <name type="primary">pepW</name>
</gene>
<dbReference type="EC" id="3.4.22.-"/>
<dbReference type="EMBL" id="Z71782">
    <property type="protein sequence ID" value="CAA96464.1"/>
    <property type="molecule type" value="Genomic_DNA"/>
</dbReference>
<dbReference type="SMR" id="P94868"/>
<dbReference type="MEROPS" id="C01.091"/>
<dbReference type="GO" id="GO:0005737">
    <property type="term" value="C:cytoplasm"/>
    <property type="evidence" value="ECO:0007669"/>
    <property type="project" value="UniProtKB-SubCell"/>
</dbReference>
<dbReference type="GO" id="GO:0070005">
    <property type="term" value="F:cysteine-type aminopeptidase activity"/>
    <property type="evidence" value="ECO:0007669"/>
    <property type="project" value="InterPro"/>
</dbReference>
<dbReference type="GO" id="GO:0043418">
    <property type="term" value="P:homocysteine catabolic process"/>
    <property type="evidence" value="ECO:0007669"/>
    <property type="project" value="TreeGrafter"/>
</dbReference>
<dbReference type="GO" id="GO:0006508">
    <property type="term" value="P:proteolysis"/>
    <property type="evidence" value="ECO:0007669"/>
    <property type="project" value="UniProtKB-KW"/>
</dbReference>
<dbReference type="GO" id="GO:0009636">
    <property type="term" value="P:response to toxic substance"/>
    <property type="evidence" value="ECO:0007669"/>
    <property type="project" value="TreeGrafter"/>
</dbReference>
<dbReference type="CDD" id="cd00585">
    <property type="entry name" value="Peptidase_C1B"/>
    <property type="match status" value="1"/>
</dbReference>
<dbReference type="Gene3D" id="3.90.70.10">
    <property type="entry name" value="Cysteine proteinases"/>
    <property type="match status" value="1"/>
</dbReference>
<dbReference type="InterPro" id="IPR038765">
    <property type="entry name" value="Papain-like_cys_pep_sf"/>
</dbReference>
<dbReference type="InterPro" id="IPR000169">
    <property type="entry name" value="Pept_cys_AS"/>
</dbReference>
<dbReference type="InterPro" id="IPR004134">
    <property type="entry name" value="Peptidase_C1B"/>
</dbReference>
<dbReference type="PANTHER" id="PTHR10363">
    <property type="entry name" value="BLEOMYCIN HYDROLASE"/>
    <property type="match status" value="1"/>
</dbReference>
<dbReference type="PANTHER" id="PTHR10363:SF2">
    <property type="entry name" value="BLEOMYCIN HYDROLASE"/>
    <property type="match status" value="1"/>
</dbReference>
<dbReference type="Pfam" id="PF03051">
    <property type="entry name" value="Peptidase_C1_2"/>
    <property type="match status" value="1"/>
</dbReference>
<dbReference type="PIRSF" id="PIRSF005700">
    <property type="entry name" value="PepC"/>
    <property type="match status" value="1"/>
</dbReference>
<dbReference type="SUPFAM" id="SSF54001">
    <property type="entry name" value="Cysteine proteinases"/>
    <property type="match status" value="1"/>
</dbReference>
<dbReference type="PROSITE" id="PS00139">
    <property type="entry name" value="THIOL_PROTEASE_CYS"/>
    <property type="match status" value="1"/>
</dbReference>
<sequence>MTHELSPQLLESFSRDFNADPKNQVISRAARRSGLLEAAYNPAVSQRLNRTFSIELDTDNVTNQQQSGRCWLFSTLNVVRHNFGKANKAKNFTFSQSYNFFWDKIERANYFYDRIIATADRPLTDRTVRGYFDWCQTDGGQWHMAASLIAKYGVVPRYAMPESFNSNHSQALDMVLADKERKDALTLRRLAQADDQEKLEAARTDFLSQIYRIMATALGEPPKTFDLEFRDDDKNYHLDKGLTPVQFYKKYCATDLDDYVVLANAPDHEMNRVLHLGFEDNIKGGYPNLFINVPMEYLEDAAIAQLKDGEAVWFGNAVGRQMDRKTGFMDLDLYQLDQLLDIDSHLSKADRLATGIGESSHDMALVGVDVDGGQVRQWKVENSWGDKSGEKGYFTMSADWFREYTYEVAVQKKHVPAEILDLLKNQPIELDPWDSLI</sequence>